<reference key="1">
    <citation type="journal article" date="1998" name="Nature">
        <title>The genome sequence of Rickettsia prowazekii and the origin of mitochondria.</title>
        <authorList>
            <person name="Andersson S.G.E."/>
            <person name="Zomorodipour A."/>
            <person name="Andersson J.O."/>
            <person name="Sicheritz-Ponten T."/>
            <person name="Alsmark U.C.M."/>
            <person name="Podowski R.M."/>
            <person name="Naeslund A.K."/>
            <person name="Eriksson A.-S."/>
            <person name="Winkler H.H."/>
            <person name="Kurland C.G."/>
        </authorList>
    </citation>
    <scope>NUCLEOTIDE SEQUENCE [LARGE SCALE GENOMIC DNA]</scope>
    <source>
        <strain>Madrid E</strain>
    </source>
</reference>
<feature type="chain" id="PRO_0000101420" description="Uncharacterized protein RP826">
    <location>
        <begin position="1"/>
        <end position="108"/>
    </location>
</feature>
<dbReference type="EMBL" id="AJ235273">
    <property type="protein sequence ID" value="CAA15251.1"/>
    <property type="molecule type" value="Genomic_DNA"/>
</dbReference>
<dbReference type="PIR" id="C71644">
    <property type="entry name" value="C71644"/>
</dbReference>
<dbReference type="RefSeq" id="NP_221175.1">
    <property type="nucleotide sequence ID" value="NC_000963.1"/>
</dbReference>
<dbReference type="RefSeq" id="WP_004596839.1">
    <property type="nucleotide sequence ID" value="NC_000963.1"/>
</dbReference>
<dbReference type="STRING" id="272947.gene:17555895"/>
<dbReference type="EnsemblBacteria" id="CAA15251">
    <property type="protein sequence ID" value="CAA15251"/>
    <property type="gene ID" value="CAA15251"/>
</dbReference>
<dbReference type="KEGG" id="rpr:RP826"/>
<dbReference type="PATRIC" id="fig|272947.5.peg.863"/>
<dbReference type="HOGENOM" id="CLU_152577_0_0_5"/>
<dbReference type="OrthoDB" id="7160947at2"/>
<dbReference type="Proteomes" id="UP000002480">
    <property type="component" value="Chromosome"/>
</dbReference>
<dbReference type="InterPro" id="IPR007922">
    <property type="entry name" value="DciA-like"/>
</dbReference>
<dbReference type="InterPro" id="IPR016507">
    <property type="entry name" value="UCP007061"/>
</dbReference>
<dbReference type="Pfam" id="PF05258">
    <property type="entry name" value="DciA"/>
    <property type="match status" value="1"/>
</dbReference>
<dbReference type="PIRSF" id="PIRSF007061">
    <property type="entry name" value="UCP007061"/>
    <property type="match status" value="1"/>
</dbReference>
<sequence length="108" mass="12806">MKLIKEDIDKIVRRIFAKQHPLLPKIMINWHKIVGFNFSTKALPLKIKTYTYKKQKINILLIQAEDNATAAELPYYQDIILERIKIYLGFEAIHQMNVTFYKAKSKVR</sequence>
<protein>
    <recommendedName>
        <fullName>Uncharacterized protein RP826</fullName>
    </recommendedName>
</protein>
<organism>
    <name type="scientific">Rickettsia prowazekii (strain Madrid E)</name>
    <dbReference type="NCBI Taxonomy" id="272947"/>
    <lineage>
        <taxon>Bacteria</taxon>
        <taxon>Pseudomonadati</taxon>
        <taxon>Pseudomonadota</taxon>
        <taxon>Alphaproteobacteria</taxon>
        <taxon>Rickettsiales</taxon>
        <taxon>Rickettsiaceae</taxon>
        <taxon>Rickettsieae</taxon>
        <taxon>Rickettsia</taxon>
        <taxon>typhus group</taxon>
    </lineage>
</organism>
<accession>Q9ZCD1</accession>
<proteinExistence type="predicted"/>
<gene>
    <name type="ordered locus">RP826</name>
</gene>
<name>Y826_RICPR</name>
<keyword id="KW-1185">Reference proteome</keyword>